<organism>
    <name type="scientific">Dickeya chrysanthemi</name>
    <name type="common">Pectobacterium chrysanthemi</name>
    <name type="synonym">Erwinia chrysanthemi</name>
    <dbReference type="NCBI Taxonomy" id="556"/>
    <lineage>
        <taxon>Bacteria</taxon>
        <taxon>Pseudomonadati</taxon>
        <taxon>Pseudomonadota</taxon>
        <taxon>Gammaproteobacteria</taxon>
        <taxon>Enterobacterales</taxon>
        <taxon>Pectobacteriaceae</taxon>
        <taxon>Dickeya</taxon>
    </lineage>
</organism>
<sequence length="66" mass="6656">MGLSNAASLASMQTLDKAMASATAMTTAAQAQKVQTDAISSITDGQMDSASKAMNSGQKAAKAIQF</sequence>
<protein>
    <recommendedName>
        <fullName>Hrp pili protein HrpA</fullName>
    </recommendedName>
    <alternativeName>
        <fullName>T3SS pilin HrpA</fullName>
    </alternativeName>
</protein>
<feature type="chain" id="PRO_0000226252" description="Hrp pili protein HrpA">
    <location>
        <begin position="1"/>
        <end position="66"/>
    </location>
</feature>
<feature type="region of interest" description="Disordered" evidence="2">
    <location>
        <begin position="46"/>
        <end position="66"/>
    </location>
</feature>
<feature type="compositionally biased region" description="Polar residues" evidence="2">
    <location>
        <begin position="46"/>
        <end position="58"/>
    </location>
</feature>
<reference key="1">
    <citation type="submission" date="2002-10" db="EMBL/GenBank/DDBJ databases">
        <title>Differential Expression and Contribution to Virulence of hrpN, pelL, pelE, and the cloning and mutagenesis of ahlI, the luxI homolog, in Erwinia chrysanthemi EC16.</title>
        <authorList>
            <person name="Ham J.H."/>
            <person name="Alfano J.R."/>
            <person name="Rodriguez-Palenzuela P."/>
            <person name="Rojas C.M."/>
            <person name="Chatterjee A.K."/>
            <person name="Collmer A."/>
        </authorList>
    </citation>
    <scope>NUCLEOTIDE SEQUENCE [GENOMIC DNA]</scope>
    <source>
        <strain>EC16</strain>
    </source>
</reference>
<reference key="2">
    <citation type="submission" date="2002-10" db="EMBL/GenBank/DDBJ databases">
        <title>Pectobacterium chrysanthemi hrp genes and hrp/hrc flanking regions.</title>
        <authorList>
            <person name="Rojas C.M."/>
            <person name="Ham J.H."/>
            <person name="Kim J.F."/>
            <person name="Beer S.V."/>
            <person name="Collmer A."/>
        </authorList>
    </citation>
    <scope>NUCLEOTIDE SEQUENCE [GENOMIC DNA]</scope>
</reference>
<keyword id="KW-0281">Fimbrium</keyword>
<keyword id="KW-0964">Secreted</keyword>
<keyword id="KW-0843">Virulence</keyword>
<accession>Q8KUM1</accession>
<dbReference type="EMBL" id="AF448202">
    <property type="protein sequence ID" value="AAM46694.1"/>
    <property type="molecule type" value="Genomic_DNA"/>
</dbReference>
<dbReference type="SMR" id="Q8KUM1"/>
<dbReference type="GO" id="GO:0005576">
    <property type="term" value="C:extracellular region"/>
    <property type="evidence" value="ECO:0007669"/>
    <property type="project" value="UniProtKB-SubCell"/>
</dbReference>
<dbReference type="GO" id="GO:0009289">
    <property type="term" value="C:pilus"/>
    <property type="evidence" value="ECO:0007669"/>
    <property type="project" value="UniProtKB-SubCell"/>
</dbReference>
<comment type="function">
    <text evidence="1">Major structure protein of the hrp pilus, which is a component of the type III secretion system (T3SS, Hrp secretion system) required for effector protein delivery, parasitism, and pathogenicity. The hrp pilus functions as a conduit for protein delivery into the host cell (By similarity).</text>
</comment>
<comment type="subcellular location">
    <subcellularLocation>
        <location evidence="1">Secreted</location>
    </subcellularLocation>
    <subcellularLocation>
        <location evidence="1">Fimbrium</location>
    </subcellularLocation>
    <text evidence="1">Extracellular and secreted via type III secretion system.</text>
</comment>
<comment type="similarity">
    <text evidence="3">Belongs to the HrpA type 2 family.</text>
</comment>
<gene>
    <name type="primary">hrpA</name>
</gene>
<evidence type="ECO:0000250" key="1"/>
<evidence type="ECO:0000256" key="2">
    <source>
        <dbReference type="SAM" id="MobiDB-lite"/>
    </source>
</evidence>
<evidence type="ECO:0000305" key="3"/>
<name>HRPA_DICCH</name>
<proteinExistence type="inferred from homology"/>